<gene>
    <name type="ordered locus">CPR_0056</name>
</gene>
<organism>
    <name type="scientific">Clostridium perfringens (strain SM101 / Type A)</name>
    <dbReference type="NCBI Taxonomy" id="289380"/>
    <lineage>
        <taxon>Bacteria</taxon>
        <taxon>Bacillati</taxon>
        <taxon>Bacillota</taxon>
        <taxon>Clostridia</taxon>
        <taxon>Eubacteriales</taxon>
        <taxon>Clostridiaceae</taxon>
        <taxon>Clostridium</taxon>
    </lineage>
</organism>
<evidence type="ECO:0000255" key="1">
    <source>
        <dbReference type="HAMAP-Rule" id="MF_00274"/>
    </source>
</evidence>
<evidence type="ECO:0000256" key="2">
    <source>
        <dbReference type="SAM" id="MobiDB-lite"/>
    </source>
</evidence>
<feature type="chain" id="PRO_1000003731" description="Nucleoid-associated protein CPR_0056">
    <location>
        <begin position="1"/>
        <end position="112"/>
    </location>
</feature>
<feature type="region of interest" description="Disordered" evidence="2">
    <location>
        <begin position="91"/>
        <end position="112"/>
    </location>
</feature>
<feature type="compositionally biased region" description="Basic and acidic residues" evidence="2">
    <location>
        <begin position="91"/>
        <end position="100"/>
    </location>
</feature>
<feature type="compositionally biased region" description="Gly residues" evidence="2">
    <location>
        <begin position="102"/>
        <end position="112"/>
    </location>
</feature>
<reference key="1">
    <citation type="journal article" date="2006" name="Genome Res.">
        <title>Skewed genomic variability in strains of the toxigenic bacterial pathogen, Clostridium perfringens.</title>
        <authorList>
            <person name="Myers G.S.A."/>
            <person name="Rasko D.A."/>
            <person name="Cheung J.K."/>
            <person name="Ravel J."/>
            <person name="Seshadri R."/>
            <person name="DeBoy R.T."/>
            <person name="Ren Q."/>
            <person name="Varga J."/>
            <person name="Awad M.M."/>
            <person name="Brinkac L.M."/>
            <person name="Daugherty S.C."/>
            <person name="Haft D.H."/>
            <person name="Dodson R.J."/>
            <person name="Madupu R."/>
            <person name="Nelson W.C."/>
            <person name="Rosovitz M.J."/>
            <person name="Sullivan S.A."/>
            <person name="Khouri H."/>
            <person name="Dimitrov G.I."/>
            <person name="Watkins K.L."/>
            <person name="Mulligan S."/>
            <person name="Benton J."/>
            <person name="Radune D."/>
            <person name="Fisher D.J."/>
            <person name="Atkins H.S."/>
            <person name="Hiscox T."/>
            <person name="Jost B.H."/>
            <person name="Billington S.J."/>
            <person name="Songer J.G."/>
            <person name="McClane B.A."/>
            <person name="Titball R.W."/>
            <person name="Rood J.I."/>
            <person name="Melville S.B."/>
            <person name="Paulsen I.T."/>
        </authorList>
    </citation>
    <scope>NUCLEOTIDE SEQUENCE [LARGE SCALE GENOMIC DNA]</scope>
    <source>
        <strain>SM101 / Type A</strain>
    </source>
</reference>
<name>Y056_CLOPS</name>
<accession>Q0SWS7</accession>
<comment type="function">
    <text evidence="1">Binds to DNA and alters its conformation. May be involved in regulation of gene expression, nucleoid organization and DNA protection.</text>
</comment>
<comment type="subunit">
    <text evidence="1">Homodimer.</text>
</comment>
<comment type="subcellular location">
    <subcellularLocation>
        <location evidence="1">Cytoplasm</location>
        <location evidence="1">Nucleoid</location>
    </subcellularLocation>
</comment>
<comment type="similarity">
    <text evidence="1">Belongs to the YbaB/EbfC family.</text>
</comment>
<proteinExistence type="inferred from homology"/>
<protein>
    <recommendedName>
        <fullName evidence="1">Nucleoid-associated protein CPR_0056</fullName>
    </recommendedName>
</protein>
<sequence>MARGGFPGGMGNMNNLMKQAQMLQKQMQSMQEEIEASEFEGSAGGGAVVAKVNGKKELIALNIKPEVVDPDDVEMLEDLVFSAVKQALEKASEETSEKMGKLTGGMGMPGLF</sequence>
<dbReference type="EMBL" id="CP000312">
    <property type="protein sequence ID" value="ABG85359.1"/>
    <property type="molecule type" value="Genomic_DNA"/>
</dbReference>
<dbReference type="RefSeq" id="WP_003458189.1">
    <property type="nucleotide sequence ID" value="NZ_CAXVKH010000009.1"/>
</dbReference>
<dbReference type="SMR" id="Q0SWS7"/>
<dbReference type="KEGG" id="cpr:CPR_0056"/>
<dbReference type="BioCyc" id="CPER289380:GI76-59-MONOMER"/>
<dbReference type="Proteomes" id="UP000001824">
    <property type="component" value="Chromosome"/>
</dbReference>
<dbReference type="GO" id="GO:0043590">
    <property type="term" value="C:bacterial nucleoid"/>
    <property type="evidence" value="ECO:0007669"/>
    <property type="project" value="UniProtKB-UniRule"/>
</dbReference>
<dbReference type="GO" id="GO:0005829">
    <property type="term" value="C:cytosol"/>
    <property type="evidence" value="ECO:0007669"/>
    <property type="project" value="TreeGrafter"/>
</dbReference>
<dbReference type="GO" id="GO:0003677">
    <property type="term" value="F:DNA binding"/>
    <property type="evidence" value="ECO:0007669"/>
    <property type="project" value="UniProtKB-UniRule"/>
</dbReference>
<dbReference type="Gene3D" id="3.30.1310.10">
    <property type="entry name" value="Nucleoid-associated protein YbaB-like domain"/>
    <property type="match status" value="1"/>
</dbReference>
<dbReference type="HAMAP" id="MF_00274">
    <property type="entry name" value="DNA_YbaB_EbfC"/>
    <property type="match status" value="1"/>
</dbReference>
<dbReference type="InterPro" id="IPR036894">
    <property type="entry name" value="YbaB-like_sf"/>
</dbReference>
<dbReference type="InterPro" id="IPR004401">
    <property type="entry name" value="YbaB/EbfC"/>
</dbReference>
<dbReference type="NCBIfam" id="TIGR00103">
    <property type="entry name" value="DNA_YbaB_EbfC"/>
    <property type="match status" value="1"/>
</dbReference>
<dbReference type="PANTHER" id="PTHR33449">
    <property type="entry name" value="NUCLEOID-ASSOCIATED PROTEIN YBAB"/>
    <property type="match status" value="1"/>
</dbReference>
<dbReference type="PANTHER" id="PTHR33449:SF1">
    <property type="entry name" value="NUCLEOID-ASSOCIATED PROTEIN YBAB"/>
    <property type="match status" value="1"/>
</dbReference>
<dbReference type="Pfam" id="PF02575">
    <property type="entry name" value="YbaB_DNA_bd"/>
    <property type="match status" value="1"/>
</dbReference>
<dbReference type="PIRSF" id="PIRSF004555">
    <property type="entry name" value="UCP004555"/>
    <property type="match status" value="1"/>
</dbReference>
<dbReference type="SUPFAM" id="SSF82607">
    <property type="entry name" value="YbaB-like"/>
    <property type="match status" value="1"/>
</dbReference>
<keyword id="KW-0963">Cytoplasm</keyword>
<keyword id="KW-0238">DNA-binding</keyword>